<name>DPO3B_PSEPU</name>
<feature type="chain" id="PRO_0000105455" description="Beta sliding clamp">
    <location>
        <begin position="1"/>
        <end position="367"/>
    </location>
</feature>
<protein>
    <recommendedName>
        <fullName>Beta sliding clamp</fullName>
        <shortName>Beta clamp</shortName>
        <shortName>Sliding clamp</shortName>
    </recommendedName>
    <alternativeName>
        <fullName>Beta-clamp processivity factor</fullName>
    </alternativeName>
    <alternativeName>
        <fullName>DNA polymerase III beta sliding clamp subunit</fullName>
    </alternativeName>
    <alternativeName>
        <fullName>DNA polymerase III subunit beta</fullName>
    </alternativeName>
</protein>
<evidence type="ECO:0000250" key="1">
    <source>
        <dbReference type="UniProtKB" id="P0A988"/>
    </source>
</evidence>
<evidence type="ECO:0000305" key="2"/>
<reference key="1">
    <citation type="journal article" date="1989" name="Mol. Gen. Genet.">
        <title>Structure of the dnaA region of Pseudomonas putida: conservation among three bacteria, Bacillus subtilis, Escherichia coli and P. putida.</title>
        <authorList>
            <person name="Fujita M.Q."/>
            <person name="Yoshikawa H."/>
            <person name="Ogasawara N."/>
        </authorList>
    </citation>
    <scope>NUCLEOTIDE SEQUENCE [GENOMIC DNA]</scope>
    <source>
        <strain>TN2100</strain>
    </source>
</reference>
<comment type="function">
    <text evidence="1">Confers DNA tethering and processivity to DNA polymerases and other proteins. Acts as a clamp, forming a ring around DNA (a reaction catalyzed by the clamp-loading complex) which diffuses in an ATP-independent manner freely and bidirectionally along dsDNA. Initially characterized for its ability to contact the catalytic subunit of DNA polymerase III (Pol III), a complex, multichain enzyme responsible for most of the replicative synthesis in bacteria; Pol III exhibits 3'-5' exonuclease proofreading activity. The beta chain is required for initiation of replication as well as for processivity of DNA replication.</text>
</comment>
<comment type="subunit">
    <text evidence="1">Forms a ring-shaped head-to-tail homodimer around DNA which binds and tethers DNA polymerases and other proteins to the DNA. The DNA replisome complex has a single clamp-loading complex (3 tau and 1 each of delta, delta', psi and chi subunits) which binds 3 Pol III cores (1 core on the leading strand and 2 on the lagging strand) each with a beta sliding clamp dimer. Additional proteins in the replisome are other copies of gamma, psi and chi, Ssb, DNA helicase and RNA primase.</text>
</comment>
<comment type="subcellular location">
    <subcellularLocation>
        <location evidence="1">Cytoplasm</location>
    </subcellularLocation>
</comment>
<comment type="similarity">
    <text evidence="2">Belongs to the beta sliding clamp family.</text>
</comment>
<dbReference type="EMBL" id="X14791">
    <property type="protein sequence ID" value="CAA32894.1"/>
    <property type="molecule type" value="Genomic_DNA"/>
</dbReference>
<dbReference type="PIR" id="JV0002">
    <property type="entry name" value="DJPS3P"/>
</dbReference>
<dbReference type="RefSeq" id="WP_003253156.1">
    <property type="nucleotide sequence ID" value="NZ_SPUU01000003.1"/>
</dbReference>
<dbReference type="SMR" id="P0A121"/>
<dbReference type="GeneID" id="83677291"/>
<dbReference type="PATRIC" id="fig|303.175.peg.35"/>
<dbReference type="eggNOG" id="COG0592">
    <property type="taxonomic scope" value="Bacteria"/>
</dbReference>
<dbReference type="OMA" id="YLIMPVR"/>
<dbReference type="GO" id="GO:0005737">
    <property type="term" value="C:cytoplasm"/>
    <property type="evidence" value="ECO:0007669"/>
    <property type="project" value="UniProtKB-SubCell"/>
</dbReference>
<dbReference type="GO" id="GO:0009360">
    <property type="term" value="C:DNA polymerase III complex"/>
    <property type="evidence" value="ECO:0007669"/>
    <property type="project" value="InterPro"/>
</dbReference>
<dbReference type="GO" id="GO:0008408">
    <property type="term" value="F:3'-5' exonuclease activity"/>
    <property type="evidence" value="ECO:0007669"/>
    <property type="project" value="InterPro"/>
</dbReference>
<dbReference type="GO" id="GO:0003677">
    <property type="term" value="F:DNA binding"/>
    <property type="evidence" value="ECO:0007669"/>
    <property type="project" value="UniProtKB-KW"/>
</dbReference>
<dbReference type="GO" id="GO:0003887">
    <property type="term" value="F:DNA-directed DNA polymerase activity"/>
    <property type="evidence" value="ECO:0007669"/>
    <property type="project" value="UniProtKB-KW"/>
</dbReference>
<dbReference type="GO" id="GO:0006271">
    <property type="term" value="P:DNA strand elongation involved in DNA replication"/>
    <property type="evidence" value="ECO:0007669"/>
    <property type="project" value="TreeGrafter"/>
</dbReference>
<dbReference type="CDD" id="cd00140">
    <property type="entry name" value="beta_clamp"/>
    <property type="match status" value="1"/>
</dbReference>
<dbReference type="FunFam" id="3.10.150.10:FF:000001">
    <property type="entry name" value="Beta sliding clamp"/>
    <property type="match status" value="1"/>
</dbReference>
<dbReference type="Gene3D" id="3.70.10.10">
    <property type="match status" value="1"/>
</dbReference>
<dbReference type="Gene3D" id="3.10.150.10">
    <property type="entry name" value="DNA Polymerase III, subunit A, domain 2"/>
    <property type="match status" value="1"/>
</dbReference>
<dbReference type="InterPro" id="IPR046938">
    <property type="entry name" value="DNA_clamp_sf"/>
</dbReference>
<dbReference type="InterPro" id="IPR001001">
    <property type="entry name" value="DNA_polIII_beta"/>
</dbReference>
<dbReference type="InterPro" id="IPR022635">
    <property type="entry name" value="DNA_polIII_beta_C"/>
</dbReference>
<dbReference type="InterPro" id="IPR022637">
    <property type="entry name" value="DNA_polIII_beta_cen"/>
</dbReference>
<dbReference type="InterPro" id="IPR022634">
    <property type="entry name" value="DNA_polIII_beta_N"/>
</dbReference>
<dbReference type="NCBIfam" id="TIGR00663">
    <property type="entry name" value="dnan"/>
    <property type="match status" value="1"/>
</dbReference>
<dbReference type="PANTHER" id="PTHR30478:SF0">
    <property type="entry name" value="BETA SLIDING CLAMP"/>
    <property type="match status" value="1"/>
</dbReference>
<dbReference type="PANTHER" id="PTHR30478">
    <property type="entry name" value="DNA POLYMERASE III SUBUNIT BETA"/>
    <property type="match status" value="1"/>
</dbReference>
<dbReference type="Pfam" id="PF00712">
    <property type="entry name" value="DNA_pol3_beta"/>
    <property type="match status" value="1"/>
</dbReference>
<dbReference type="Pfam" id="PF02767">
    <property type="entry name" value="DNA_pol3_beta_2"/>
    <property type="match status" value="1"/>
</dbReference>
<dbReference type="Pfam" id="PF02768">
    <property type="entry name" value="DNA_pol3_beta_3"/>
    <property type="match status" value="1"/>
</dbReference>
<dbReference type="PIRSF" id="PIRSF000804">
    <property type="entry name" value="DNA_pol_III_b"/>
    <property type="match status" value="1"/>
</dbReference>
<dbReference type="SMART" id="SM00480">
    <property type="entry name" value="POL3Bc"/>
    <property type="match status" value="1"/>
</dbReference>
<dbReference type="SUPFAM" id="SSF55979">
    <property type="entry name" value="DNA clamp"/>
    <property type="match status" value="3"/>
</dbReference>
<keyword id="KW-0963">Cytoplasm</keyword>
<keyword id="KW-0235">DNA replication</keyword>
<keyword id="KW-0238">DNA-binding</keyword>
<keyword id="KW-0239">DNA-directed DNA polymerase</keyword>
<keyword id="KW-0548">Nucleotidyltransferase</keyword>
<keyword id="KW-0808">Transferase</keyword>
<organism>
    <name type="scientific">Pseudomonas putida</name>
    <name type="common">Arthrobacter siderocapsulatus</name>
    <dbReference type="NCBI Taxonomy" id="303"/>
    <lineage>
        <taxon>Bacteria</taxon>
        <taxon>Pseudomonadati</taxon>
        <taxon>Pseudomonadota</taxon>
        <taxon>Gammaproteobacteria</taxon>
        <taxon>Pseudomonadales</taxon>
        <taxon>Pseudomonadaceae</taxon>
        <taxon>Pseudomonas</taxon>
    </lineage>
</organism>
<proteinExistence type="inferred from homology"/>
<gene>
    <name type="primary">dnaN</name>
</gene>
<sequence>MHFTIQREALLKPLQLVAGVVERRQTLPVLSNVLLVVQGQQLSLTGTDLEVELVGRVQLEEPAEPGEITVPARKLMDICKSLPNDALIDIKVDEQKLLVKAGRSRFTLSTLPANDFPTVEEGPGSLTCNLEQSKLRRLIERTSFAMAQQDVRYYLNGMLLEVSRNTLRAVSTDGHRLALCSMSAPIEQEDRHQVIVPRKGILELARLLTDPEGMVSIVLGQHHIRATTGEFTFTSKLVDGKFPDYERVLPKGGDKLVVGDRQALREAFSRTAILSNEKYRGIRLQLAAGQLKIQANNPEQEEAEEEISVDYEGSSLEIGFNVSYLLDVLGVMTTEQVRLILSDSNSSALLQEAGNDDSSYVVMPMRL</sequence>
<accession>P0A121</accession>
<accession>P13455</accession>